<gene>
    <name evidence="1" type="primary">ahcY</name>
    <name type="ordered locus">CE0767</name>
</gene>
<protein>
    <recommendedName>
        <fullName evidence="1">Adenosylhomocysteinase</fullName>
        <ecNumber evidence="1">3.13.2.1</ecNumber>
    </recommendedName>
    <alternativeName>
        <fullName evidence="1">S-adenosyl-L-homocysteine hydrolase</fullName>
        <shortName evidence="1">AdoHcyase</shortName>
    </alternativeName>
</protein>
<evidence type="ECO:0000255" key="1">
    <source>
        <dbReference type="HAMAP-Rule" id="MF_00563"/>
    </source>
</evidence>
<dbReference type="EC" id="3.13.2.1" evidence="1"/>
<dbReference type="EMBL" id="BA000035">
    <property type="protein sequence ID" value="BAC17577.1"/>
    <property type="molecule type" value="Genomic_DNA"/>
</dbReference>
<dbReference type="RefSeq" id="WP_006769551.1">
    <property type="nucleotide sequence ID" value="NC_004369.1"/>
</dbReference>
<dbReference type="SMR" id="Q8FRJ4"/>
<dbReference type="STRING" id="196164.gene:10741169"/>
<dbReference type="KEGG" id="cef:CE0767"/>
<dbReference type="eggNOG" id="COG0499">
    <property type="taxonomic scope" value="Bacteria"/>
</dbReference>
<dbReference type="HOGENOM" id="CLU_025194_2_1_11"/>
<dbReference type="OrthoDB" id="9802717at2"/>
<dbReference type="BRENDA" id="3.3.1.1">
    <property type="organism ID" value="7850"/>
</dbReference>
<dbReference type="UniPathway" id="UPA00314">
    <property type="reaction ID" value="UER00076"/>
</dbReference>
<dbReference type="Proteomes" id="UP000001409">
    <property type="component" value="Chromosome"/>
</dbReference>
<dbReference type="GO" id="GO:0005829">
    <property type="term" value="C:cytosol"/>
    <property type="evidence" value="ECO:0007669"/>
    <property type="project" value="TreeGrafter"/>
</dbReference>
<dbReference type="GO" id="GO:0004013">
    <property type="term" value="F:adenosylhomocysteinase activity"/>
    <property type="evidence" value="ECO:0007669"/>
    <property type="project" value="UniProtKB-UniRule"/>
</dbReference>
<dbReference type="GO" id="GO:0071269">
    <property type="term" value="P:L-homocysteine biosynthetic process"/>
    <property type="evidence" value="ECO:0007669"/>
    <property type="project" value="UniProtKB-UniRule"/>
</dbReference>
<dbReference type="GO" id="GO:0006730">
    <property type="term" value="P:one-carbon metabolic process"/>
    <property type="evidence" value="ECO:0007669"/>
    <property type="project" value="UniProtKB-KW"/>
</dbReference>
<dbReference type="GO" id="GO:0033353">
    <property type="term" value="P:S-adenosylmethionine cycle"/>
    <property type="evidence" value="ECO:0007669"/>
    <property type="project" value="TreeGrafter"/>
</dbReference>
<dbReference type="CDD" id="cd00401">
    <property type="entry name" value="SAHH"/>
    <property type="match status" value="1"/>
</dbReference>
<dbReference type="FunFam" id="3.40.50.720:FF:000004">
    <property type="entry name" value="Adenosylhomocysteinase"/>
    <property type="match status" value="1"/>
</dbReference>
<dbReference type="Gene3D" id="3.40.50.1480">
    <property type="entry name" value="Adenosylhomocysteinase-like"/>
    <property type="match status" value="1"/>
</dbReference>
<dbReference type="Gene3D" id="3.40.50.720">
    <property type="entry name" value="NAD(P)-binding Rossmann-like Domain"/>
    <property type="match status" value="1"/>
</dbReference>
<dbReference type="HAMAP" id="MF_00563">
    <property type="entry name" value="AdoHcyase"/>
    <property type="match status" value="1"/>
</dbReference>
<dbReference type="InterPro" id="IPR042172">
    <property type="entry name" value="Adenosylhomocyst_ase-like_sf"/>
</dbReference>
<dbReference type="InterPro" id="IPR000043">
    <property type="entry name" value="Adenosylhomocysteinase-like"/>
</dbReference>
<dbReference type="InterPro" id="IPR015878">
    <property type="entry name" value="Ado_hCys_hydrolase_NAD-bd"/>
</dbReference>
<dbReference type="InterPro" id="IPR036291">
    <property type="entry name" value="NAD(P)-bd_dom_sf"/>
</dbReference>
<dbReference type="InterPro" id="IPR020082">
    <property type="entry name" value="S-Ado-L-homoCys_hydrolase_CS"/>
</dbReference>
<dbReference type="NCBIfam" id="TIGR00936">
    <property type="entry name" value="ahcY"/>
    <property type="match status" value="1"/>
</dbReference>
<dbReference type="NCBIfam" id="NF004005">
    <property type="entry name" value="PRK05476.2-3"/>
    <property type="match status" value="1"/>
</dbReference>
<dbReference type="PANTHER" id="PTHR23420">
    <property type="entry name" value="ADENOSYLHOMOCYSTEINASE"/>
    <property type="match status" value="1"/>
</dbReference>
<dbReference type="PANTHER" id="PTHR23420:SF0">
    <property type="entry name" value="ADENOSYLHOMOCYSTEINASE"/>
    <property type="match status" value="1"/>
</dbReference>
<dbReference type="Pfam" id="PF05221">
    <property type="entry name" value="AdoHcyase"/>
    <property type="match status" value="1"/>
</dbReference>
<dbReference type="Pfam" id="PF00670">
    <property type="entry name" value="AdoHcyase_NAD"/>
    <property type="match status" value="1"/>
</dbReference>
<dbReference type="PIRSF" id="PIRSF001109">
    <property type="entry name" value="Ad_hcy_hydrolase"/>
    <property type="match status" value="1"/>
</dbReference>
<dbReference type="SMART" id="SM00996">
    <property type="entry name" value="AdoHcyase"/>
    <property type="match status" value="1"/>
</dbReference>
<dbReference type="SMART" id="SM00997">
    <property type="entry name" value="AdoHcyase_NAD"/>
    <property type="match status" value="1"/>
</dbReference>
<dbReference type="SUPFAM" id="SSF52283">
    <property type="entry name" value="Formate/glycerate dehydrogenase catalytic domain-like"/>
    <property type="match status" value="1"/>
</dbReference>
<dbReference type="SUPFAM" id="SSF51735">
    <property type="entry name" value="NAD(P)-binding Rossmann-fold domains"/>
    <property type="match status" value="1"/>
</dbReference>
<dbReference type="PROSITE" id="PS00738">
    <property type="entry name" value="ADOHCYASE_1"/>
    <property type="match status" value="1"/>
</dbReference>
<dbReference type="PROSITE" id="PS00739">
    <property type="entry name" value="ADOHCYASE_2"/>
    <property type="match status" value="1"/>
</dbReference>
<keyword id="KW-0963">Cytoplasm</keyword>
<keyword id="KW-0378">Hydrolase</keyword>
<keyword id="KW-0520">NAD</keyword>
<keyword id="KW-0554">One-carbon metabolism</keyword>
<keyword id="KW-1185">Reference proteome</keyword>
<proteinExistence type="inferred from homology"/>
<sequence length="478" mass="52777">MAKVTDFKVADLSLAEAGRHQIRLAEYEMPGLMQLRREYAEEQPLKGARIAGSIHMTVQTAVLIETLTALGAEVRWASCNIFSTQDEAAAAIVVGDGTPEDPQGVPVFAWKGETLDEYWWCINQIFSWEGELPNMILDDGGDATMAVIRGREYEKAGVVPQPEANDSDEYIAFLGMLREVLAEEPDKWTRLADSIKGVTEETTTGVHRLYHFAEEGVLPFPAMNVNDAVTKSKFDNKYGTRHSLIDGINRATDMLMGGKNVLVCGYGDVGKGCAEAFDGQGARVRVTEADPINALQALMDGYSVVTVDEAIADADIVITATGNKDIISYEQMLKMKDHALLGNIGHFDNEIDMHSLLHRDDVIRTTIKPQVDEFTFPNGKSIIVLSEGRLLNLGNATGHPSFVMSTSFADQTIAQIELFQNEGQYENQVYRLPKILDEKVARIHVEALGGKLTELTKEQAEYIGVDVAGPFKPEHYRY</sequence>
<reference key="1">
    <citation type="journal article" date="2003" name="Genome Res.">
        <title>Comparative complete genome sequence analysis of the amino acid replacements responsible for the thermostability of Corynebacterium efficiens.</title>
        <authorList>
            <person name="Nishio Y."/>
            <person name="Nakamura Y."/>
            <person name="Kawarabayasi Y."/>
            <person name="Usuda Y."/>
            <person name="Kimura E."/>
            <person name="Sugimoto S."/>
            <person name="Matsui K."/>
            <person name="Yamagishi A."/>
            <person name="Kikuchi H."/>
            <person name="Ikeo K."/>
            <person name="Gojobori T."/>
        </authorList>
    </citation>
    <scope>NUCLEOTIDE SEQUENCE [LARGE SCALE GENOMIC DNA]</scope>
    <source>
        <strain>DSM 44549 / YS-314 / AJ 12310 / JCM 11189 / NBRC 100395</strain>
    </source>
</reference>
<name>SAHH_COREF</name>
<feature type="chain" id="PRO_0000116959" description="Adenosylhomocysteinase">
    <location>
        <begin position="1"/>
        <end position="478"/>
    </location>
</feature>
<feature type="binding site" evidence="1">
    <location>
        <position position="57"/>
    </location>
    <ligand>
        <name>substrate</name>
    </ligand>
</feature>
<feature type="binding site" evidence="1">
    <location>
        <position position="139"/>
    </location>
    <ligand>
        <name>substrate</name>
    </ligand>
</feature>
<feature type="binding site" evidence="1">
    <location>
        <position position="201"/>
    </location>
    <ligand>
        <name>substrate</name>
    </ligand>
</feature>
<feature type="binding site" evidence="1">
    <location>
        <begin position="202"/>
        <end position="204"/>
    </location>
    <ligand>
        <name>NAD(+)</name>
        <dbReference type="ChEBI" id="CHEBI:57540"/>
    </ligand>
</feature>
<feature type="binding site" evidence="1">
    <location>
        <position position="231"/>
    </location>
    <ligand>
        <name>substrate</name>
    </ligand>
</feature>
<feature type="binding site" evidence="1">
    <location>
        <position position="235"/>
    </location>
    <ligand>
        <name>substrate</name>
    </ligand>
</feature>
<feature type="binding site" evidence="1">
    <location>
        <position position="236"/>
    </location>
    <ligand>
        <name>NAD(+)</name>
        <dbReference type="ChEBI" id="CHEBI:57540"/>
    </ligand>
</feature>
<feature type="binding site" evidence="1">
    <location>
        <begin position="265"/>
        <end position="270"/>
    </location>
    <ligand>
        <name>NAD(+)</name>
        <dbReference type="ChEBI" id="CHEBI:57540"/>
    </ligand>
</feature>
<feature type="binding site" evidence="1">
    <location>
        <position position="288"/>
    </location>
    <ligand>
        <name>NAD(+)</name>
        <dbReference type="ChEBI" id="CHEBI:57540"/>
    </ligand>
</feature>
<feature type="binding site" evidence="1">
    <location>
        <position position="323"/>
    </location>
    <ligand>
        <name>NAD(+)</name>
        <dbReference type="ChEBI" id="CHEBI:57540"/>
    </ligand>
</feature>
<feature type="binding site" evidence="1">
    <location>
        <begin position="344"/>
        <end position="346"/>
    </location>
    <ligand>
        <name>NAD(+)</name>
        <dbReference type="ChEBI" id="CHEBI:57540"/>
    </ligand>
</feature>
<feature type="binding site" evidence="1">
    <location>
        <position position="392"/>
    </location>
    <ligand>
        <name>NAD(+)</name>
        <dbReference type="ChEBI" id="CHEBI:57540"/>
    </ligand>
</feature>
<organism>
    <name type="scientific">Corynebacterium efficiens (strain DSM 44549 / YS-314 / AJ 12310 / JCM 11189 / NBRC 100395)</name>
    <dbReference type="NCBI Taxonomy" id="196164"/>
    <lineage>
        <taxon>Bacteria</taxon>
        <taxon>Bacillati</taxon>
        <taxon>Actinomycetota</taxon>
        <taxon>Actinomycetes</taxon>
        <taxon>Mycobacteriales</taxon>
        <taxon>Corynebacteriaceae</taxon>
        <taxon>Corynebacterium</taxon>
    </lineage>
</organism>
<accession>Q8FRJ4</accession>
<comment type="function">
    <text evidence="1">May play a key role in the regulation of the intracellular concentration of adenosylhomocysteine.</text>
</comment>
<comment type="catalytic activity">
    <reaction evidence="1">
        <text>S-adenosyl-L-homocysteine + H2O = L-homocysteine + adenosine</text>
        <dbReference type="Rhea" id="RHEA:21708"/>
        <dbReference type="ChEBI" id="CHEBI:15377"/>
        <dbReference type="ChEBI" id="CHEBI:16335"/>
        <dbReference type="ChEBI" id="CHEBI:57856"/>
        <dbReference type="ChEBI" id="CHEBI:58199"/>
        <dbReference type="EC" id="3.13.2.1"/>
    </reaction>
</comment>
<comment type="cofactor">
    <cofactor evidence="1">
        <name>NAD(+)</name>
        <dbReference type="ChEBI" id="CHEBI:57540"/>
    </cofactor>
    <text evidence="1">Binds 1 NAD(+) per subunit.</text>
</comment>
<comment type="pathway">
    <text evidence="1">Amino-acid biosynthesis; L-homocysteine biosynthesis; L-homocysteine from S-adenosyl-L-homocysteine: step 1/1.</text>
</comment>
<comment type="subcellular location">
    <subcellularLocation>
        <location evidence="1">Cytoplasm</location>
    </subcellularLocation>
</comment>
<comment type="similarity">
    <text evidence="1">Belongs to the adenosylhomocysteinase family.</text>
</comment>